<proteinExistence type="evidence at protein level"/>
<comment type="function">
    <text evidence="5 6 7">Catalyzes the oxidation of cytokinins, a family of N(6)-substituted adenine derivatives that are plant hormones, where the substituent is an isopentenyl group (PubMed:14555694). Catalyzes in vitro the oxidation of various types of cytokinin nucleotides that are known as direct products of cytokinin biosynthesis (PubMed:20825956). In association with CKX5 regulates the activity of the reproductive meristems, flower organ size and ovule formation (PubMed:21224426).</text>
</comment>
<comment type="catalytic activity">
    <reaction evidence="6">
        <text>N(6)-dimethylallyladenine + A + H2O = 3-methyl-2-butenal + adenine + AH2</text>
        <dbReference type="Rhea" id="RHEA:13625"/>
        <dbReference type="ChEBI" id="CHEBI:13193"/>
        <dbReference type="ChEBI" id="CHEBI:15377"/>
        <dbReference type="ChEBI" id="CHEBI:15825"/>
        <dbReference type="ChEBI" id="CHEBI:16708"/>
        <dbReference type="ChEBI" id="CHEBI:17499"/>
        <dbReference type="ChEBI" id="CHEBI:17660"/>
        <dbReference type="EC" id="1.5.99.12"/>
    </reaction>
</comment>
<comment type="cofactor">
    <cofactor evidence="1">
        <name>FAD</name>
        <dbReference type="ChEBI" id="CHEBI:57692"/>
    </cofactor>
</comment>
<comment type="biophysicochemical properties">
    <kinetics>
        <KM evidence="5">7.2 uM for isopentenyladenine</KM>
        <Vmax evidence="5">7.7 nmol/h/mg enzyme</Vmax>
    </kinetics>
</comment>
<comment type="subcellular location">
    <subcellularLocation>
        <location evidence="5">Endoplasmic reticulum</location>
    </subcellularLocation>
    <subcellularLocation>
        <location evidence="5">Vacuole</location>
    </subcellularLocation>
</comment>
<comment type="tissue specificity">
    <text evidence="5 8">Very weak expression in the young shoot tissues around two weeks after germination (PubMed:14555694). Present in the center of the floral meristem and the boundary between long stamen primordia and gynoecial primordia (PubMed:26390296).</text>
</comment>
<comment type="induction">
    <text evidence="8">Regulated by GATA18/HAN.</text>
</comment>
<comment type="similarity">
    <text evidence="9">Belongs to the oxygen-dependent FAD-linked oxidoreductase family.</text>
</comment>
<sequence length="523" mass="59423">MASYNLRSQVRLIAITIVIIITLSTPITTNTSPQPWNILSHNEFAGKLTSSSSSVESAATDFGHVTKIFPSAVLIPSSVEDITDLIKLSFDSQLSFPLAARGHGHSHRGQASAKDGVVVNMRSMVNRDRGIKVSRTCLYVDVDAAWLWIEVLNKTLELGLTPVSWTDYLYLTVGGTLSNGGISGQTFRYGPQITNVLEMDVITGKGEIATCSKDMNSDLFFAVLGGLGQFGIITRARIKLEVAPKRAKWLRFLYIDFSEFTRDQERVISKTDGVDFLEGSIMVDHGPPDNWRSTYYPPSDHLRIASMVKRHRVIYCLEVVKYYDETSQYTVNEEMEELSDSLNHVRGFMYEKDVTYMDFLNRVRTGELNLKSKGQWDVPHPWLNLFVPKTQISKFDDGVFKGIILRNNITSGPVLVYPMNRNKWNDRMSAAIPEEDVFYAVGFLRSAGFDNWEAFDQENMEILKFCEDANMGVIQYLPYHSSQEGWVRHFGPRWNIFVERKYKYDPKMILSPGQNIFQKINSS</sequence>
<name>CKX3_ARATH</name>
<organism>
    <name type="scientific">Arabidopsis thaliana</name>
    <name type="common">Mouse-ear cress</name>
    <dbReference type="NCBI Taxonomy" id="3702"/>
    <lineage>
        <taxon>Eukaryota</taxon>
        <taxon>Viridiplantae</taxon>
        <taxon>Streptophyta</taxon>
        <taxon>Embryophyta</taxon>
        <taxon>Tracheophyta</taxon>
        <taxon>Spermatophyta</taxon>
        <taxon>Magnoliopsida</taxon>
        <taxon>eudicotyledons</taxon>
        <taxon>Gunneridae</taxon>
        <taxon>Pentapetalae</taxon>
        <taxon>rosids</taxon>
        <taxon>malvids</taxon>
        <taxon>Brassicales</taxon>
        <taxon>Brassicaceae</taxon>
        <taxon>Camelineae</taxon>
        <taxon>Arabidopsis</taxon>
    </lineage>
</organism>
<keyword id="KW-0256">Endoplasmic reticulum</keyword>
<keyword id="KW-0274">FAD</keyword>
<keyword id="KW-0285">Flavoprotein</keyword>
<keyword id="KW-0325">Glycoprotein</keyword>
<keyword id="KW-0560">Oxidoreductase</keyword>
<keyword id="KW-1185">Reference proteome</keyword>
<keyword id="KW-0732">Signal</keyword>
<keyword id="KW-0926">Vacuole</keyword>
<reference key="1">
    <citation type="journal article" date="2001" name="Plant Physiol.">
        <title>Molecular and biochemical characterization of a cytokinin oxidase from maize.</title>
        <authorList>
            <person name="Bilyeu K.D."/>
            <person name="Cole J.L."/>
            <person name="Laskey J.G."/>
            <person name="Riekhof W.R."/>
            <person name="Esparza T.J."/>
            <person name="Kramer M.D."/>
            <person name="Morris R.O."/>
        </authorList>
    </citation>
    <scope>NUCLEOTIDE SEQUENCE [MRNA]</scope>
</reference>
<reference key="2">
    <citation type="journal article" date="2000" name="DNA Res.">
        <title>Structural analysis of Arabidopsis thaliana chromosome 5. X. Sequence features of the regions of 3,076,755 bp covered by sixty P1 and TAC clones.</title>
        <authorList>
            <person name="Sato S."/>
            <person name="Nakamura Y."/>
            <person name="Kaneko T."/>
            <person name="Katoh T."/>
            <person name="Asamizu E."/>
            <person name="Kotani H."/>
            <person name="Tabata S."/>
        </authorList>
    </citation>
    <scope>NUCLEOTIDE SEQUENCE [LARGE SCALE GENOMIC DNA]</scope>
    <source>
        <strain>cv. Columbia</strain>
    </source>
</reference>
<reference key="3">
    <citation type="journal article" date="2017" name="Plant J.">
        <title>Araport11: a complete reannotation of the Arabidopsis thaliana reference genome.</title>
        <authorList>
            <person name="Cheng C.Y."/>
            <person name="Krishnakumar V."/>
            <person name="Chan A.P."/>
            <person name="Thibaud-Nissen F."/>
            <person name="Schobel S."/>
            <person name="Town C.D."/>
        </authorList>
    </citation>
    <scope>GENOME REANNOTATION</scope>
    <source>
        <strain>cv. Columbia</strain>
    </source>
</reference>
<reference key="4">
    <citation type="journal article" date="2003" name="Plant Cell">
        <title>Cytokinin-deficient transgenic Arabidopsis plants show multiple developmental alterations indicating opposite functions of cytokinins in the regulation of shoot and root meristem activity.</title>
        <authorList>
            <person name="Werner T."/>
            <person name="Motyka V."/>
            <person name="Laucou V."/>
            <person name="Smets R."/>
            <person name="Van Onckelen H."/>
            <person name="Schmulling T."/>
        </authorList>
    </citation>
    <scope>FUNCTION</scope>
    <scope>BIOPHYSICOCHEMICAL PROPERTIES</scope>
    <scope>SUBCELLULAR LOCATION</scope>
    <scope>TISSUE SPECIFICITY</scope>
</reference>
<reference key="5">
    <citation type="journal article" date="2003" name="J. Plant Res.">
        <title>Structure and function of cytokinin oxidase/dehydrogenase genes of maize, rice, Arabidopsis and other species.</title>
        <authorList>
            <person name="Schmuelling T."/>
            <person name="Werner T."/>
            <person name="Riefler M."/>
            <person name="Krupkova E."/>
            <person name="Bartrina y Manns I."/>
        </authorList>
    </citation>
    <scope>REVIEW</scope>
    <scope>NOMENCLATURE</scope>
</reference>
<reference key="6">
    <citation type="journal article" date="2010" name="Phytochemistry">
        <title>Vacuolar and cytosolic cytokinin dehydrogenases of Arabidopsis thaliana: heterologous expression, purification and properties.</title>
        <authorList>
            <person name="Kowalska M."/>
            <person name="Galuszka P."/>
            <person name="Frebortova J."/>
            <person name="Sebela M."/>
            <person name="Beres T."/>
            <person name="Hluska T."/>
            <person name="Smehilova M."/>
            <person name="Bilyeu K.D."/>
            <person name="Frebort I."/>
        </authorList>
    </citation>
    <scope>FUNCTION</scope>
    <scope>CATALYTIC ACTIVITY</scope>
</reference>
<reference key="7">
    <citation type="journal article" date="2011" name="Plant Cell">
        <title>Cytokinin regulates the activity of reproductive meristems, flower organ size, ovule formation, and thus seed yield in Arabidopsis thaliana.</title>
        <authorList>
            <person name="Bartrina I."/>
            <person name="Otto E."/>
            <person name="Strnad M."/>
            <person name="Werner T."/>
            <person name="Schmuelling T."/>
        </authorList>
    </citation>
    <scope>FUNCTION</scope>
</reference>
<reference key="8">
    <citation type="journal article" date="2015" name="PLoS Genet.">
        <title>HANABA TARANU (HAN) bridges meristem and organ primordia boundaries through PINHEAD, JAGGED, BLADE-ON-PETIOLE2 and CYTOKININ OXIDASE 3 during flower development in Arabidopsis.</title>
        <authorList>
            <person name="Ding L."/>
            <person name="Yan S."/>
            <person name="Jiang L."/>
            <person name="Zhao W."/>
            <person name="Ning K."/>
            <person name="Zhao J."/>
            <person name="Liu X."/>
            <person name="Zhang J."/>
            <person name="Wang Q."/>
            <person name="Zhang X."/>
        </authorList>
    </citation>
    <scope>INDUCTION BY GATA18/HAN</scope>
    <scope>TISSUE SPECIFICITY</scope>
</reference>
<dbReference type="EC" id="1.5.99.12" evidence="6"/>
<dbReference type="EMBL" id="AF303979">
    <property type="protein sequence ID" value="AAG30906.1"/>
    <property type="molecule type" value="mRNA"/>
</dbReference>
<dbReference type="EMBL" id="AB024035">
    <property type="protein sequence ID" value="BAA97027.1"/>
    <property type="molecule type" value="Genomic_DNA"/>
</dbReference>
<dbReference type="EMBL" id="CP002688">
    <property type="protein sequence ID" value="AED96828.1"/>
    <property type="molecule type" value="Genomic_DNA"/>
</dbReference>
<dbReference type="RefSeq" id="NP_200507.1">
    <property type="nucleotide sequence ID" value="NM_125079.3"/>
</dbReference>
<dbReference type="SMR" id="Q9LTS3"/>
<dbReference type="BioGRID" id="21043">
    <property type="interactions" value="2"/>
</dbReference>
<dbReference type="STRING" id="3702.Q9LTS3"/>
<dbReference type="GlyCosmos" id="Q9LTS3">
    <property type="glycosylation" value="2 sites, No reported glycans"/>
</dbReference>
<dbReference type="GlyGen" id="Q9LTS3">
    <property type="glycosylation" value="2 sites"/>
</dbReference>
<dbReference type="iPTMnet" id="Q9LTS3"/>
<dbReference type="PaxDb" id="3702-AT5G56970.1"/>
<dbReference type="ProteomicsDB" id="222614"/>
<dbReference type="EnsemblPlants" id="AT5G56970.1">
    <property type="protein sequence ID" value="AT5G56970.1"/>
    <property type="gene ID" value="AT5G56970"/>
</dbReference>
<dbReference type="GeneID" id="835799"/>
<dbReference type="Gramene" id="AT5G56970.1">
    <property type="protein sequence ID" value="AT5G56970.1"/>
    <property type="gene ID" value="AT5G56970"/>
</dbReference>
<dbReference type="KEGG" id="ath:AT5G56970"/>
<dbReference type="Araport" id="AT5G56970"/>
<dbReference type="TAIR" id="AT5G56970">
    <property type="gene designation" value="CKX3"/>
</dbReference>
<dbReference type="eggNOG" id="KOG1231">
    <property type="taxonomic scope" value="Eukaryota"/>
</dbReference>
<dbReference type="HOGENOM" id="CLU_024955_1_0_1"/>
<dbReference type="InParanoid" id="Q9LTS3"/>
<dbReference type="PhylomeDB" id="Q9LTS3"/>
<dbReference type="BioCyc" id="ARA:AT5G56970-MONOMER"/>
<dbReference type="BioCyc" id="MetaCyc:AT5G56970-MONOMER"/>
<dbReference type="BRENDA" id="1.5.99.12">
    <property type="organism ID" value="399"/>
</dbReference>
<dbReference type="SABIO-RK" id="Q9LTS3"/>
<dbReference type="PRO" id="PR:Q9LTS3"/>
<dbReference type="Proteomes" id="UP000006548">
    <property type="component" value="Chromosome 5"/>
</dbReference>
<dbReference type="ExpressionAtlas" id="Q9LTS3">
    <property type="expression patterns" value="baseline and differential"/>
</dbReference>
<dbReference type="GO" id="GO:0005783">
    <property type="term" value="C:endoplasmic reticulum"/>
    <property type="evidence" value="ECO:0007669"/>
    <property type="project" value="UniProtKB-SubCell"/>
</dbReference>
<dbReference type="GO" id="GO:0005773">
    <property type="term" value="C:vacuole"/>
    <property type="evidence" value="ECO:0000314"/>
    <property type="project" value="TAIR"/>
</dbReference>
<dbReference type="GO" id="GO:0019139">
    <property type="term" value="F:cytokinin dehydrogenase activity"/>
    <property type="evidence" value="ECO:0000314"/>
    <property type="project" value="TAIR"/>
</dbReference>
<dbReference type="GO" id="GO:0071949">
    <property type="term" value="F:FAD binding"/>
    <property type="evidence" value="ECO:0007669"/>
    <property type="project" value="InterPro"/>
</dbReference>
<dbReference type="GO" id="GO:0008131">
    <property type="term" value="F:primary methylamine oxidase activity"/>
    <property type="evidence" value="ECO:0000314"/>
    <property type="project" value="TAIR"/>
</dbReference>
<dbReference type="GO" id="GO:0009823">
    <property type="term" value="P:cytokinin catabolic process"/>
    <property type="evidence" value="ECO:0000314"/>
    <property type="project" value="TAIR"/>
</dbReference>
<dbReference type="FunFam" id="3.30.465.10:FF:000021">
    <property type="entry name" value="Cytokinin dehydrogenase 1"/>
    <property type="match status" value="1"/>
</dbReference>
<dbReference type="FunFam" id="3.40.462.10:FF:000001">
    <property type="entry name" value="Cytokinin dehydrogenase 2"/>
    <property type="match status" value="1"/>
</dbReference>
<dbReference type="Gene3D" id="3.30.465.10">
    <property type="match status" value="1"/>
</dbReference>
<dbReference type="Gene3D" id="3.40.462.10">
    <property type="entry name" value="FAD-linked oxidases, C-terminal domain"/>
    <property type="match status" value="1"/>
</dbReference>
<dbReference type="Gene3D" id="3.30.43.10">
    <property type="entry name" value="Uridine Diphospho-n-acetylenolpyruvylglucosamine Reductase, domain 2"/>
    <property type="match status" value="1"/>
</dbReference>
<dbReference type="InterPro" id="IPR016170">
    <property type="entry name" value="Cytok_DH_C_sf"/>
</dbReference>
<dbReference type="InterPro" id="IPR015345">
    <property type="entry name" value="Cytokinin_DH_FAD/cytokin-bd"/>
</dbReference>
<dbReference type="InterPro" id="IPR016166">
    <property type="entry name" value="FAD-bd_PCMH"/>
</dbReference>
<dbReference type="InterPro" id="IPR036318">
    <property type="entry name" value="FAD-bd_PCMH-like_sf"/>
</dbReference>
<dbReference type="InterPro" id="IPR016167">
    <property type="entry name" value="FAD-bd_PCMH_sub1"/>
</dbReference>
<dbReference type="InterPro" id="IPR016169">
    <property type="entry name" value="FAD-bd_PCMH_sub2"/>
</dbReference>
<dbReference type="InterPro" id="IPR016164">
    <property type="entry name" value="FAD-linked_Oxase-like_C"/>
</dbReference>
<dbReference type="InterPro" id="IPR050432">
    <property type="entry name" value="FAD-linked_Oxidoreductases_BP"/>
</dbReference>
<dbReference type="InterPro" id="IPR006094">
    <property type="entry name" value="Oxid_FAD_bind_N"/>
</dbReference>
<dbReference type="InterPro" id="IPR006093">
    <property type="entry name" value="Oxy_OxRdtase_FAD_BS"/>
</dbReference>
<dbReference type="PANTHER" id="PTHR13878:SF127">
    <property type="entry name" value="CYTOKININ DEHYDROGENASE 3"/>
    <property type="match status" value="1"/>
</dbReference>
<dbReference type="PANTHER" id="PTHR13878">
    <property type="entry name" value="GULONOLACTONE OXIDASE"/>
    <property type="match status" value="1"/>
</dbReference>
<dbReference type="Pfam" id="PF09265">
    <property type="entry name" value="Cytokin-bind"/>
    <property type="match status" value="1"/>
</dbReference>
<dbReference type="Pfam" id="PF01565">
    <property type="entry name" value="FAD_binding_4"/>
    <property type="match status" value="1"/>
</dbReference>
<dbReference type="SUPFAM" id="SSF56176">
    <property type="entry name" value="FAD-binding/transporter-associated domain-like"/>
    <property type="match status" value="1"/>
</dbReference>
<dbReference type="SUPFAM" id="SSF55103">
    <property type="entry name" value="FAD-linked oxidases, C-terminal domain"/>
    <property type="match status" value="1"/>
</dbReference>
<dbReference type="PROSITE" id="PS51387">
    <property type="entry name" value="FAD_PCMH"/>
    <property type="match status" value="1"/>
</dbReference>
<dbReference type="PROSITE" id="PS00862">
    <property type="entry name" value="OX2_COVAL_FAD"/>
    <property type="match status" value="1"/>
</dbReference>
<protein>
    <recommendedName>
        <fullName>Cytokinin dehydrogenase 3</fullName>
        <ecNumber evidence="6">1.5.99.12</ecNumber>
    </recommendedName>
    <alternativeName>
        <fullName>Cytokinin oxidase 3</fullName>
        <shortName>AtCKX3</shortName>
        <shortName>CKO 3</shortName>
    </alternativeName>
</protein>
<feature type="signal peptide" evidence="3">
    <location>
        <begin position="1"/>
        <end position="31"/>
    </location>
</feature>
<feature type="chain" id="PRO_0000020420" description="Cytokinin dehydrogenase 3">
    <location>
        <begin position="32"/>
        <end position="523"/>
    </location>
</feature>
<feature type="domain" description="FAD-binding PCMH-type" evidence="4">
    <location>
        <begin position="66"/>
        <end position="243"/>
    </location>
</feature>
<feature type="binding site" evidence="1">
    <location>
        <position position="100"/>
    </location>
    <ligand>
        <name>FAD</name>
        <dbReference type="ChEBI" id="CHEBI:57692"/>
    </ligand>
</feature>
<feature type="binding site" evidence="2">
    <location>
        <position position="102"/>
    </location>
    <ligand>
        <name>FAD</name>
        <dbReference type="ChEBI" id="CHEBI:57692"/>
    </ligand>
</feature>
<feature type="binding site" evidence="2">
    <location>
        <position position="104"/>
    </location>
    <ligand>
        <name>FAD</name>
        <dbReference type="ChEBI" id="CHEBI:57692"/>
    </ligand>
</feature>
<feature type="binding site" evidence="2">
    <location>
        <position position="106"/>
    </location>
    <ligand>
        <name>FAD</name>
        <dbReference type="ChEBI" id="CHEBI:57692"/>
    </ligand>
</feature>
<feature type="binding site" evidence="2">
    <location>
        <position position="110"/>
    </location>
    <ligand>
        <name>FAD</name>
        <dbReference type="ChEBI" id="CHEBI:57692"/>
    </ligand>
</feature>
<feature type="binding site" evidence="2">
    <location>
        <position position="167"/>
    </location>
    <ligand>
        <name>FAD</name>
        <dbReference type="ChEBI" id="CHEBI:57692"/>
    </ligand>
</feature>
<feature type="binding site" evidence="2">
    <location>
        <position position="172"/>
    </location>
    <ligand>
        <name>FAD</name>
        <dbReference type="ChEBI" id="CHEBI:57692"/>
    </ligand>
</feature>
<feature type="binding site" evidence="2">
    <location>
        <position position="178"/>
    </location>
    <ligand>
        <name>FAD</name>
        <dbReference type="ChEBI" id="CHEBI:57692"/>
    </ligand>
</feature>
<feature type="binding site" evidence="2">
    <location>
        <position position="182"/>
    </location>
    <ligand>
        <name>FAD</name>
        <dbReference type="ChEBI" id="CHEBI:57692"/>
    </ligand>
</feature>
<feature type="binding site" evidence="2">
    <location>
        <position position="233"/>
    </location>
    <ligand>
        <name>FAD</name>
        <dbReference type="ChEBI" id="CHEBI:57692"/>
    </ligand>
</feature>
<feature type="binding site" evidence="2">
    <location>
        <position position="476"/>
    </location>
    <ligand>
        <name>FAD</name>
        <dbReference type="ChEBI" id="CHEBI:57692"/>
    </ligand>
</feature>
<feature type="binding site" evidence="2">
    <location>
        <position position="511"/>
    </location>
    <ligand>
        <name>FAD</name>
        <dbReference type="ChEBI" id="CHEBI:57692"/>
    </ligand>
</feature>
<feature type="binding site" evidence="2">
    <location>
        <position position="514"/>
    </location>
    <ligand>
        <name>FAD</name>
        <dbReference type="ChEBI" id="CHEBI:57692"/>
    </ligand>
</feature>
<feature type="modified residue" description="Pros-8alpha-FAD histidine" evidence="2">
    <location>
        <position position="105"/>
    </location>
</feature>
<feature type="glycosylation site" description="N-linked (GlcNAc...) asparagine" evidence="3">
    <location>
        <position position="153"/>
    </location>
</feature>
<feature type="glycosylation site" description="N-linked (GlcNAc...) asparagine" evidence="3">
    <location>
        <position position="408"/>
    </location>
</feature>
<gene>
    <name type="primary">CKX3</name>
    <name type="ordered locus">At5g56970</name>
    <name type="ORF">MHM17.8</name>
</gene>
<accession>Q9LTS3</accession>
<evidence type="ECO:0000250" key="1">
    <source>
        <dbReference type="UniProtKB" id="Q9FUJ1"/>
    </source>
</evidence>
<evidence type="ECO:0000250" key="2">
    <source>
        <dbReference type="UniProtKB" id="Q9T0N8"/>
    </source>
</evidence>
<evidence type="ECO:0000255" key="3"/>
<evidence type="ECO:0000255" key="4">
    <source>
        <dbReference type="PROSITE-ProRule" id="PRU00718"/>
    </source>
</evidence>
<evidence type="ECO:0000269" key="5">
    <source>
    </source>
</evidence>
<evidence type="ECO:0000269" key="6">
    <source>
    </source>
</evidence>
<evidence type="ECO:0000269" key="7">
    <source>
    </source>
</evidence>
<evidence type="ECO:0000269" key="8">
    <source>
    </source>
</evidence>
<evidence type="ECO:0000305" key="9"/>